<comment type="function">
    <text evidence="1">This protein is involved in the repair of mismatches in DNA. It is possible that it carries out the mismatch recognition step. This protein has a weak ATPase activity.</text>
</comment>
<comment type="similarity">
    <text evidence="1">Belongs to the DNA mismatch repair MutS family.</text>
</comment>
<proteinExistence type="inferred from homology"/>
<protein>
    <recommendedName>
        <fullName evidence="1">DNA mismatch repair protein MutS</fullName>
    </recommendedName>
</protein>
<name>MUTS_CHRFK</name>
<evidence type="ECO:0000255" key="1">
    <source>
        <dbReference type="HAMAP-Rule" id="MF_00096"/>
    </source>
</evidence>
<keyword id="KW-0067">ATP-binding</keyword>
<keyword id="KW-0227">DNA damage</keyword>
<keyword id="KW-0234">DNA repair</keyword>
<keyword id="KW-0238">DNA-binding</keyword>
<keyword id="KW-0547">Nucleotide-binding</keyword>
<organism>
    <name type="scientific">Christiangramia forsetii (strain DSM 17595 / CGMCC 1.15422 / KT0803)</name>
    <name type="common">Gramella forsetii</name>
    <dbReference type="NCBI Taxonomy" id="411154"/>
    <lineage>
        <taxon>Bacteria</taxon>
        <taxon>Pseudomonadati</taxon>
        <taxon>Bacteroidota</taxon>
        <taxon>Flavobacteriia</taxon>
        <taxon>Flavobacteriales</taxon>
        <taxon>Flavobacteriaceae</taxon>
        <taxon>Christiangramia</taxon>
    </lineage>
</organism>
<dbReference type="EMBL" id="CU207366">
    <property type="protein sequence ID" value="CAL65242.1"/>
    <property type="molecule type" value="Genomic_DNA"/>
</dbReference>
<dbReference type="RefSeq" id="WP_011708180.1">
    <property type="nucleotide sequence ID" value="NC_008571.1"/>
</dbReference>
<dbReference type="SMR" id="A0LXZ7"/>
<dbReference type="STRING" id="411154.GFO_0254"/>
<dbReference type="KEGG" id="gfo:GFO_0254"/>
<dbReference type="eggNOG" id="COG0249">
    <property type="taxonomic scope" value="Bacteria"/>
</dbReference>
<dbReference type="HOGENOM" id="CLU_002472_3_1_10"/>
<dbReference type="OrthoDB" id="9802448at2"/>
<dbReference type="Proteomes" id="UP000000755">
    <property type="component" value="Chromosome"/>
</dbReference>
<dbReference type="GO" id="GO:0005829">
    <property type="term" value="C:cytosol"/>
    <property type="evidence" value="ECO:0007669"/>
    <property type="project" value="TreeGrafter"/>
</dbReference>
<dbReference type="GO" id="GO:0005524">
    <property type="term" value="F:ATP binding"/>
    <property type="evidence" value="ECO:0007669"/>
    <property type="project" value="UniProtKB-UniRule"/>
</dbReference>
<dbReference type="GO" id="GO:0140664">
    <property type="term" value="F:ATP-dependent DNA damage sensor activity"/>
    <property type="evidence" value="ECO:0007669"/>
    <property type="project" value="InterPro"/>
</dbReference>
<dbReference type="GO" id="GO:0003684">
    <property type="term" value="F:damaged DNA binding"/>
    <property type="evidence" value="ECO:0007669"/>
    <property type="project" value="UniProtKB-UniRule"/>
</dbReference>
<dbReference type="GO" id="GO:0030983">
    <property type="term" value="F:mismatched DNA binding"/>
    <property type="evidence" value="ECO:0007669"/>
    <property type="project" value="InterPro"/>
</dbReference>
<dbReference type="GO" id="GO:0006298">
    <property type="term" value="P:mismatch repair"/>
    <property type="evidence" value="ECO:0007669"/>
    <property type="project" value="UniProtKB-UniRule"/>
</dbReference>
<dbReference type="CDD" id="cd03284">
    <property type="entry name" value="ABC_MutS1"/>
    <property type="match status" value="1"/>
</dbReference>
<dbReference type="FunFam" id="3.40.1170.10:FF:000001">
    <property type="entry name" value="DNA mismatch repair protein MutS"/>
    <property type="match status" value="1"/>
</dbReference>
<dbReference type="FunFam" id="3.40.50.300:FF:000870">
    <property type="entry name" value="MutS protein homolog 4"/>
    <property type="match status" value="1"/>
</dbReference>
<dbReference type="Gene3D" id="1.10.1420.10">
    <property type="match status" value="2"/>
</dbReference>
<dbReference type="Gene3D" id="3.40.1170.10">
    <property type="entry name" value="DNA repair protein MutS, domain I"/>
    <property type="match status" value="1"/>
</dbReference>
<dbReference type="Gene3D" id="3.30.420.110">
    <property type="entry name" value="MutS, connector domain"/>
    <property type="match status" value="1"/>
</dbReference>
<dbReference type="Gene3D" id="3.40.50.300">
    <property type="entry name" value="P-loop containing nucleotide triphosphate hydrolases"/>
    <property type="match status" value="1"/>
</dbReference>
<dbReference type="HAMAP" id="MF_00096">
    <property type="entry name" value="MutS"/>
    <property type="match status" value="1"/>
</dbReference>
<dbReference type="InterPro" id="IPR005748">
    <property type="entry name" value="DNA_mismatch_repair_MutS"/>
</dbReference>
<dbReference type="InterPro" id="IPR007695">
    <property type="entry name" value="DNA_mismatch_repair_MutS-lik_N"/>
</dbReference>
<dbReference type="InterPro" id="IPR017261">
    <property type="entry name" value="DNA_mismatch_repair_MutS/MSH"/>
</dbReference>
<dbReference type="InterPro" id="IPR000432">
    <property type="entry name" value="DNA_mismatch_repair_MutS_C"/>
</dbReference>
<dbReference type="InterPro" id="IPR007861">
    <property type="entry name" value="DNA_mismatch_repair_MutS_clamp"/>
</dbReference>
<dbReference type="InterPro" id="IPR007696">
    <property type="entry name" value="DNA_mismatch_repair_MutS_core"/>
</dbReference>
<dbReference type="InterPro" id="IPR016151">
    <property type="entry name" value="DNA_mismatch_repair_MutS_N"/>
</dbReference>
<dbReference type="InterPro" id="IPR036187">
    <property type="entry name" value="DNA_mismatch_repair_MutS_sf"/>
</dbReference>
<dbReference type="InterPro" id="IPR007860">
    <property type="entry name" value="DNA_mmatch_repair_MutS_con_dom"/>
</dbReference>
<dbReference type="InterPro" id="IPR045076">
    <property type="entry name" value="MutS"/>
</dbReference>
<dbReference type="InterPro" id="IPR036678">
    <property type="entry name" value="MutS_con_dom_sf"/>
</dbReference>
<dbReference type="InterPro" id="IPR027417">
    <property type="entry name" value="P-loop_NTPase"/>
</dbReference>
<dbReference type="NCBIfam" id="TIGR01070">
    <property type="entry name" value="mutS1"/>
    <property type="match status" value="1"/>
</dbReference>
<dbReference type="NCBIfam" id="NF003810">
    <property type="entry name" value="PRK05399.1"/>
    <property type="match status" value="1"/>
</dbReference>
<dbReference type="PANTHER" id="PTHR11361:SF34">
    <property type="entry name" value="DNA MISMATCH REPAIR PROTEIN MSH1, MITOCHONDRIAL"/>
    <property type="match status" value="1"/>
</dbReference>
<dbReference type="PANTHER" id="PTHR11361">
    <property type="entry name" value="DNA MISMATCH REPAIR PROTEIN MUTS FAMILY MEMBER"/>
    <property type="match status" value="1"/>
</dbReference>
<dbReference type="Pfam" id="PF01624">
    <property type="entry name" value="MutS_I"/>
    <property type="match status" value="1"/>
</dbReference>
<dbReference type="Pfam" id="PF05188">
    <property type="entry name" value="MutS_II"/>
    <property type="match status" value="1"/>
</dbReference>
<dbReference type="Pfam" id="PF05192">
    <property type="entry name" value="MutS_III"/>
    <property type="match status" value="1"/>
</dbReference>
<dbReference type="Pfam" id="PF05190">
    <property type="entry name" value="MutS_IV"/>
    <property type="match status" value="1"/>
</dbReference>
<dbReference type="Pfam" id="PF00488">
    <property type="entry name" value="MutS_V"/>
    <property type="match status" value="1"/>
</dbReference>
<dbReference type="PIRSF" id="PIRSF037677">
    <property type="entry name" value="DNA_mis_repair_Msh6"/>
    <property type="match status" value="1"/>
</dbReference>
<dbReference type="SMART" id="SM00534">
    <property type="entry name" value="MUTSac"/>
    <property type="match status" value="1"/>
</dbReference>
<dbReference type="SMART" id="SM00533">
    <property type="entry name" value="MUTSd"/>
    <property type="match status" value="1"/>
</dbReference>
<dbReference type="SUPFAM" id="SSF55271">
    <property type="entry name" value="DNA repair protein MutS, domain I"/>
    <property type="match status" value="1"/>
</dbReference>
<dbReference type="SUPFAM" id="SSF53150">
    <property type="entry name" value="DNA repair protein MutS, domain II"/>
    <property type="match status" value="1"/>
</dbReference>
<dbReference type="SUPFAM" id="SSF48334">
    <property type="entry name" value="DNA repair protein MutS, domain III"/>
    <property type="match status" value="1"/>
</dbReference>
<dbReference type="SUPFAM" id="SSF52540">
    <property type="entry name" value="P-loop containing nucleoside triphosphate hydrolases"/>
    <property type="match status" value="1"/>
</dbReference>
<dbReference type="PROSITE" id="PS00486">
    <property type="entry name" value="DNA_MISMATCH_REPAIR_2"/>
    <property type="match status" value="1"/>
</dbReference>
<reference key="1">
    <citation type="journal article" date="2006" name="Environ. Microbiol.">
        <title>Whole genome analysis of the marine Bacteroidetes'Gramella forsetii' reveals adaptations to degradation of polymeric organic matter.</title>
        <authorList>
            <person name="Bauer M."/>
            <person name="Kube M."/>
            <person name="Teeling H."/>
            <person name="Richter M."/>
            <person name="Lombardot T."/>
            <person name="Allers E."/>
            <person name="Wuerdemann C.A."/>
            <person name="Quast C."/>
            <person name="Kuhl H."/>
            <person name="Knaust F."/>
            <person name="Woebken D."/>
            <person name="Bischof K."/>
            <person name="Mussmann M."/>
            <person name="Choudhuri J.V."/>
            <person name="Meyer F."/>
            <person name="Reinhardt R."/>
            <person name="Amann R.I."/>
            <person name="Gloeckner F.O."/>
        </authorList>
    </citation>
    <scope>NUCLEOTIDE SEQUENCE [LARGE SCALE GENOMIC DNA]</scope>
    <source>
        <strain>DSM 17595 / CGMCC 1.15422 / KT0803</strain>
    </source>
</reference>
<feature type="chain" id="PRO_0000335162" description="DNA mismatch repair protein MutS">
    <location>
        <begin position="1"/>
        <end position="871"/>
    </location>
</feature>
<feature type="binding site" evidence="1">
    <location>
        <begin position="618"/>
        <end position="625"/>
    </location>
    <ligand>
        <name>ATP</name>
        <dbReference type="ChEBI" id="CHEBI:30616"/>
    </ligand>
</feature>
<accession>A0LXZ7</accession>
<sequence>MAAKKSQKVTPLMQQYNSIKLKYPDAMLLFRVGDFYETFGEDAVKAARILNIVLTNRNNGGERTELAGFPHHSLNTYLPKLVKAGQRVAICDQLEDPKMTKTIVKRGVTELVTPGVAMNDDILNSKSNNFLCAVHFGKKNLGVSFLDVSTGEFLCAQGNTEYIDKLLQNFGPSEILVQKKFKKEFNESFGKDKHCFYLDDWIFKIDYSEETLNAHFQTKSLKGFGIDHLEEGIIASGAVLYYLAETRHHRLQHINSINRIAEEQYVWMDRFTIRNLELYHSTAANAVTLLDVIDKTISPMGGRLLKRWLALPLKDAEMIEKRLQVVDFLIKNPEILANIQDQIREISDLERLISKVATQKISPREVNQLKNSLNAIIPVKELALKCNNEALKIIGDNLHSCDLLREKISESISEDAPVLIQRGGVIASGFSSELDELRGLAFSGKDYLDKMIQRETEKTGISSLKIGSNNVYGYYIEVRNTHKDKVPEEWTRKQTLVNAERYITEELKEYESKILGAEEKILHLEQELFGKLIAWMAEYIDPVQQNARLIARLDCLCSFAQQAQAENYSKPEITDSYGMDIEEGRHPVIEKQLPPGEVYVTNNLHLDREEQQIIMITGPNMSGKSAILRQTALIVLMAQMGSFVPARSAEIGLVDKIFTRVGASDNISMGESTFMVEMNETASILNNISDRSLVLLDEIGRGTSTYDGISIAWAISEYLHEHPAKPKTLFATHYHELNEMCETFERIKNFNVSVKELKDNVLFLRKLVPGGSEHSFGIHVAKMAGMPQMVLHRANKILAKLEASHSMEDSGAVLKKSAEDEMQLSFFNLDDPLLEDLKQELLGIDIDTLTPVEALMKLNEIKRMLGNNKQQ</sequence>
<gene>
    <name evidence="1" type="primary">mutS</name>
    <name type="ordered locus">GFO_0254</name>
</gene>